<sequence>MKILFVLISILYAVYCFSSEEDVDSAYLANELEPVEDINSEQYAALEPKEEQERSCAGMGRDCKDDCDCCLNIATCNCWFGRYFCSCTFGDYQTCLRKKGKCKRNRPQSCPRSNLNRKKG</sequence>
<accession>B6DD24</accession>
<feature type="signal peptide" evidence="2">
    <location>
        <begin position="1"/>
        <end position="16"/>
    </location>
</feature>
<feature type="propeptide" id="PRO_0000401867" evidence="1">
    <location>
        <begin position="17"/>
        <end position="54"/>
    </location>
</feature>
<feature type="chain" id="PRO_0000401868" description="U13-lycotoxin-Ls1e">
    <location>
        <begin position="55"/>
        <end position="120"/>
    </location>
</feature>
<feature type="domain" description="Agouti">
    <location>
        <begin position="56"/>
        <end position="95"/>
    </location>
</feature>
<feature type="disulfide bond" evidence="1">
    <location>
        <begin position="56"/>
        <end position="70"/>
    </location>
</feature>
<feature type="disulfide bond" evidence="1">
    <location>
        <begin position="63"/>
        <end position="76"/>
    </location>
</feature>
<feature type="disulfide bond" evidence="1">
    <location>
        <begin position="69"/>
        <end position="87"/>
    </location>
</feature>
<feature type="disulfide bond" evidence="1">
    <location>
        <begin position="78"/>
        <end position="85"/>
    </location>
</feature>
<name>TXD06_LYCSI</name>
<dbReference type="EMBL" id="EU926108">
    <property type="protein sequence ID" value="ACI41440.1"/>
    <property type="molecule type" value="mRNA"/>
</dbReference>
<dbReference type="EMBL" id="FM864112">
    <property type="protein sequence ID" value="CAS03709.1"/>
    <property type="molecule type" value="mRNA"/>
</dbReference>
<dbReference type="SMR" id="B6DD24"/>
<dbReference type="ArachnoServer" id="AS001047">
    <property type="toxin name" value="U13-lycotoxin-Ls1e"/>
</dbReference>
<dbReference type="GO" id="GO:0005576">
    <property type="term" value="C:extracellular region"/>
    <property type="evidence" value="ECO:0007669"/>
    <property type="project" value="UniProtKB-SubCell"/>
</dbReference>
<dbReference type="GO" id="GO:0090729">
    <property type="term" value="F:toxin activity"/>
    <property type="evidence" value="ECO:0007669"/>
    <property type="project" value="UniProtKB-KW"/>
</dbReference>
<proteinExistence type="evidence at transcript level"/>
<keyword id="KW-1015">Disulfide bond</keyword>
<keyword id="KW-0960">Knottin</keyword>
<keyword id="KW-0964">Secreted</keyword>
<keyword id="KW-0732">Signal</keyword>
<keyword id="KW-0800">Toxin</keyword>
<reference key="1">
    <citation type="journal article" date="2010" name="Zoology">
        <title>Transcriptome analysis of the venom glands of the Chinese wolf spider Lycosa singoriensis.</title>
        <authorList>
            <person name="Zhang Y."/>
            <person name="Chen J."/>
            <person name="Tang X."/>
            <person name="Wang F."/>
            <person name="Jiang L."/>
            <person name="Xiong X."/>
            <person name="Wang M."/>
            <person name="Rong M."/>
            <person name="Liu Z."/>
            <person name="Liang S."/>
        </authorList>
    </citation>
    <scope>NUCLEOTIDE SEQUENCE [LARGE SCALE MRNA]</scope>
    <source>
        <tissue>Venom gland</tissue>
    </source>
</reference>
<protein>
    <recommendedName>
        <fullName>U13-lycotoxin-Ls1e</fullName>
    </recommendedName>
    <alternativeName>
        <fullName>Toxin-like structure LSTX-L6</fullName>
    </alternativeName>
</protein>
<comment type="subcellular location">
    <subcellularLocation>
        <location evidence="1">Secreted</location>
    </subcellularLocation>
</comment>
<comment type="tissue specificity">
    <text>Expressed by the venom gland.</text>
</comment>
<comment type="domain">
    <text evidence="1">The presence of a 'disulfide through disulfide kOR' structurally defines this protein as a knottin.</text>
</comment>
<comment type="PTM">
    <text evidence="3">Contains 6 disulfide bonds.</text>
</comment>
<comment type="similarity">
    <text evidence="3">Belongs to the neurotoxin 05 (agouti) family.</text>
</comment>
<organism>
    <name type="scientific">Lycosa singoriensis</name>
    <name type="common">Wolf spider</name>
    <name type="synonym">Aranea singoriensis</name>
    <dbReference type="NCBI Taxonomy" id="434756"/>
    <lineage>
        <taxon>Eukaryota</taxon>
        <taxon>Metazoa</taxon>
        <taxon>Ecdysozoa</taxon>
        <taxon>Arthropoda</taxon>
        <taxon>Chelicerata</taxon>
        <taxon>Arachnida</taxon>
        <taxon>Araneae</taxon>
        <taxon>Araneomorphae</taxon>
        <taxon>Entelegynae</taxon>
        <taxon>Lycosoidea</taxon>
        <taxon>Lycosidae</taxon>
        <taxon>Lycosa</taxon>
    </lineage>
</organism>
<evidence type="ECO:0000250" key="1"/>
<evidence type="ECO:0000255" key="2"/>
<evidence type="ECO:0000305" key="3"/>